<proteinExistence type="evidence at protein level"/>
<evidence type="ECO:0000250" key="1"/>
<evidence type="ECO:0000269" key="2">
    <source>
    </source>
</evidence>
<evidence type="ECO:0000269" key="3">
    <source>
    </source>
</evidence>
<evidence type="ECO:0000269" key="4">
    <source>
    </source>
</evidence>
<evidence type="ECO:0000305" key="5"/>
<evidence type="ECO:0007829" key="6">
    <source>
        <dbReference type="PDB" id="1W23"/>
    </source>
</evidence>
<accession>Q9RME2</accession>
<name>SERC_ALKAL</name>
<reference key="1">
    <citation type="submission" date="1999-11" db="EMBL/GenBank/DDBJ databases">
        <title>Phosphoserine aminotransferase from obligate alkalophile Bacillus alcalophilus.</title>
        <authorList>
            <person name="Battchikova N.V."/>
            <person name="Koivulehto M.K."/>
        </authorList>
    </citation>
    <scope>NUCLEOTIDE SEQUENCE [GENOMIC DNA]</scope>
    <source>
        <strain>ATCC 27647 / DSM 485 / JCM 5262 / NBRC 15653 / NCTC 4553 / 1</strain>
    </source>
</reference>
<reference key="2">
    <citation type="journal article" date="2003" name="Acta Crystallogr. D">
        <title>Expression, purification, crystallization and preliminary crystallographic analysis of phosphoserine aminotransferase from Bacillus alcalophilus.</title>
        <authorList>
            <person name="Dubnovitsky A.P."/>
            <person name="Kapetaniou E.G."/>
            <person name="Papageorgiou A.C."/>
        </authorList>
    </citation>
    <scope>FUNCTION</scope>
    <scope>SUBUNIT</scope>
    <scope>CRYSTALLIZATION</scope>
    <source>
        <strain>ATCC 27647 / DSM 485 / JCM 5262 / NBRC 15653 / NCTC 4553 / 1</strain>
    </source>
</reference>
<reference key="3">
    <citation type="journal article" date="2005" name="Protein Sci.">
        <title>Enzyme adaptation to alkaline pH: atomic resolution (1.08 A) structure of phosphoserine aminotransferase from Bacillus alcalophilus.</title>
        <authorList>
            <person name="Dubnovitsky A.P."/>
            <person name="Kapetaniou E.G."/>
            <person name="Papageorgiou A.C."/>
        </authorList>
    </citation>
    <scope>X-RAY CRYSTALLOGRAPHY (1.08 ANGSTROMS) IN COMPLEX WITH PLP</scope>
    <scope>SUBUNIT</scope>
    <scope>COFACTOR</scope>
    <scope>PH DEPENDENCE</scope>
    <source>
        <strain>ATCC 27647 / DSM 485 / JCM 5262 / NBRC 15653 / NCTC 4553 / 1</strain>
    </source>
</reference>
<reference key="4">
    <citation type="journal article" date="2005" name="Protein Sci.">
        <title>Strain relief at the active site of phosphoserine aminotransferase induced by radiation damage.</title>
        <authorList>
            <person name="Dubnovitsky A.P."/>
            <person name="Ravelli R.B.G."/>
            <person name="Popov A.N."/>
            <person name="Papageorgiou A.C."/>
        </authorList>
    </citation>
    <scope>X-RAY CRYSTALLOGRAPHY (1.3 ANGSTROMS) IN COMPLEX WITH PLP</scope>
    <scope>COFACTOR</scope>
    <source>
        <strain>ATCC 27647 / DSM 485 / JCM 5262 / NBRC 15653 / NCTC 4553 / 1</strain>
    </source>
</reference>
<organism>
    <name type="scientific">Alkalihalobacillus alcalophilus</name>
    <name type="common">Bacillus alcalophilus</name>
    <dbReference type="NCBI Taxonomy" id="1445"/>
    <lineage>
        <taxon>Bacteria</taxon>
        <taxon>Bacillati</taxon>
        <taxon>Bacillota</taxon>
        <taxon>Bacilli</taxon>
        <taxon>Bacillales</taxon>
        <taxon>Bacillaceae</taxon>
        <taxon>Alkalihalobacillus</taxon>
    </lineage>
</organism>
<comment type="function">
    <text evidence="2">Catalyzes the reversible conversion of 3-phosphohydroxypyruvate to phosphoserine and of 3-hydroxy-2-oxo-4-phosphonooxybutanoate to phosphohydroxythreonine.</text>
</comment>
<comment type="catalytic activity">
    <reaction>
        <text>O-phospho-L-serine + 2-oxoglutarate = 3-phosphooxypyruvate + L-glutamate</text>
        <dbReference type="Rhea" id="RHEA:14329"/>
        <dbReference type="ChEBI" id="CHEBI:16810"/>
        <dbReference type="ChEBI" id="CHEBI:18110"/>
        <dbReference type="ChEBI" id="CHEBI:29985"/>
        <dbReference type="ChEBI" id="CHEBI:57524"/>
        <dbReference type="EC" id="2.6.1.52"/>
    </reaction>
</comment>
<comment type="catalytic activity">
    <reaction>
        <text>4-(phosphooxy)-L-threonine + 2-oxoglutarate = (R)-3-hydroxy-2-oxo-4-phosphooxybutanoate + L-glutamate</text>
        <dbReference type="Rhea" id="RHEA:16573"/>
        <dbReference type="ChEBI" id="CHEBI:16810"/>
        <dbReference type="ChEBI" id="CHEBI:29985"/>
        <dbReference type="ChEBI" id="CHEBI:58452"/>
        <dbReference type="ChEBI" id="CHEBI:58538"/>
        <dbReference type="EC" id="2.6.1.52"/>
    </reaction>
</comment>
<comment type="cofactor">
    <cofactor evidence="3 4">
        <name>pyridoxal 5'-phosphate</name>
        <dbReference type="ChEBI" id="CHEBI:597326"/>
    </cofactor>
    <text evidence="3 4">Binds 1 pyridoxal phosphate per subunit.</text>
</comment>
<comment type="biophysicochemical properties">
    <phDependence>
        <text evidence="3">Optimum pH is 9.0. At pH 9.5, retains more than 60% of its maximum activity. At pH 7.0 the relative activity is less than 10%.</text>
    </phDependence>
</comment>
<comment type="pathway">
    <text>Amino-acid biosynthesis; L-serine biosynthesis; L-serine from 3-phospho-D-glycerate: step 2/3.</text>
</comment>
<comment type="subunit">
    <text evidence="2 3 4">Homodimer.</text>
</comment>
<comment type="subcellular location">
    <subcellularLocation>
        <location evidence="1">Cytoplasm</location>
    </subcellularLocation>
</comment>
<comment type="similarity">
    <text evidence="5">Belongs to the class-V pyridoxal-phosphate-dependent aminotransferase family. SerC subfamily.</text>
</comment>
<feature type="chain" id="PRO_0000293583" description="Phosphoserine aminotransferase">
    <location>
        <begin position="1"/>
        <end position="361"/>
    </location>
</feature>
<feature type="binding site" evidence="1">
    <location>
        <position position="43"/>
    </location>
    <ligand>
        <name>L-glutamate</name>
        <dbReference type="ChEBI" id="CHEBI:29985"/>
    </ligand>
</feature>
<feature type="binding site">
    <location>
        <begin position="77"/>
        <end position="78"/>
    </location>
    <ligand>
        <name>pyridoxal 5'-phosphate</name>
        <dbReference type="ChEBI" id="CHEBI:597326"/>
    </ligand>
</feature>
<feature type="binding site">
    <location>
        <position position="103"/>
    </location>
    <ligand>
        <name>pyridoxal 5'-phosphate</name>
        <dbReference type="ChEBI" id="CHEBI:597326"/>
    </ligand>
</feature>
<feature type="binding site">
    <location>
        <position position="153"/>
    </location>
    <ligand>
        <name>pyridoxal 5'-phosphate</name>
        <dbReference type="ChEBI" id="CHEBI:597326"/>
    </ligand>
</feature>
<feature type="binding site">
    <location>
        <position position="173"/>
    </location>
    <ligand>
        <name>pyridoxal 5'-phosphate</name>
        <dbReference type="ChEBI" id="CHEBI:597326"/>
    </ligand>
</feature>
<feature type="binding site">
    <location>
        <position position="196"/>
    </location>
    <ligand>
        <name>pyridoxal 5'-phosphate</name>
        <dbReference type="ChEBI" id="CHEBI:597326"/>
    </ligand>
</feature>
<feature type="binding site">
    <location>
        <begin position="238"/>
        <end position="239"/>
    </location>
    <ligand>
        <name>pyridoxal 5'-phosphate</name>
        <dbReference type="ChEBI" id="CHEBI:597326"/>
    </ligand>
</feature>
<feature type="modified residue" description="N6-(pyridoxal phosphate)lysine">
    <location>
        <position position="197"/>
    </location>
</feature>
<feature type="strand" evidence="6">
    <location>
        <begin position="10"/>
        <end position="12"/>
    </location>
</feature>
<feature type="helix" evidence="6">
    <location>
        <begin position="17"/>
        <end position="25"/>
    </location>
</feature>
<feature type="strand" evidence="6">
    <location>
        <begin position="27"/>
        <end position="30"/>
    </location>
</feature>
<feature type="strand" evidence="6">
    <location>
        <begin position="33"/>
        <end position="35"/>
    </location>
</feature>
<feature type="helix" evidence="6">
    <location>
        <begin position="37"/>
        <end position="39"/>
    </location>
</feature>
<feature type="helix" evidence="6">
    <location>
        <begin position="45"/>
        <end position="62"/>
    </location>
</feature>
<feature type="strand" evidence="6">
    <location>
        <begin position="68"/>
        <end position="75"/>
    </location>
</feature>
<feature type="helix" evidence="6">
    <location>
        <begin position="76"/>
        <end position="88"/>
    </location>
</feature>
<feature type="strand" evidence="6">
    <location>
        <begin position="94"/>
        <end position="99"/>
    </location>
</feature>
<feature type="helix" evidence="6">
    <location>
        <begin position="102"/>
        <end position="112"/>
    </location>
</feature>
<feature type="strand" evidence="6">
    <location>
        <begin position="115"/>
        <end position="122"/>
    </location>
</feature>
<feature type="helix" evidence="6">
    <location>
        <begin position="124"/>
        <end position="126"/>
    </location>
</feature>
<feature type="helix" evidence="6">
    <location>
        <begin position="134"/>
        <end position="136"/>
    </location>
</feature>
<feature type="strand" evidence="6">
    <location>
        <begin position="143"/>
        <end position="152"/>
    </location>
</feature>
<feature type="turn" evidence="6">
    <location>
        <begin position="153"/>
        <end position="156"/>
    </location>
</feature>
<feature type="strand" evidence="6">
    <location>
        <begin position="170"/>
        <end position="173"/>
    </location>
</feature>
<feature type="turn" evidence="6">
    <location>
        <begin position="175"/>
        <end position="179"/>
    </location>
</feature>
<feature type="helix" evidence="6">
    <location>
        <begin position="185"/>
        <end position="187"/>
    </location>
</feature>
<feature type="strand" evidence="6">
    <location>
        <begin position="189"/>
        <end position="194"/>
    </location>
</feature>
<feature type="turn" evidence="6">
    <location>
        <begin position="195"/>
        <end position="199"/>
    </location>
</feature>
<feature type="strand" evidence="6">
    <location>
        <begin position="205"/>
        <end position="210"/>
    </location>
</feature>
<feature type="helix" evidence="6">
    <location>
        <begin position="211"/>
        <end position="214"/>
    </location>
</feature>
<feature type="helix" evidence="6">
    <location>
        <begin position="223"/>
        <end position="225"/>
    </location>
</feature>
<feature type="helix" evidence="6">
    <location>
        <begin position="227"/>
        <end position="232"/>
    </location>
</feature>
<feature type="turn" evidence="6">
    <location>
        <begin position="233"/>
        <end position="235"/>
    </location>
</feature>
<feature type="helix" evidence="6">
    <location>
        <begin position="242"/>
        <end position="257"/>
    </location>
</feature>
<feature type="helix" evidence="6">
    <location>
        <begin position="260"/>
        <end position="280"/>
    </location>
</feature>
<feature type="turn" evidence="6">
    <location>
        <begin position="281"/>
        <end position="284"/>
    </location>
</feature>
<feature type="strand" evidence="6">
    <location>
        <begin position="285"/>
        <end position="290"/>
    </location>
</feature>
<feature type="helix" evidence="6">
    <location>
        <begin position="292"/>
        <end position="294"/>
    </location>
</feature>
<feature type="strand" evidence="6">
    <location>
        <begin position="297"/>
        <end position="303"/>
    </location>
</feature>
<feature type="helix" evidence="6">
    <location>
        <begin position="307"/>
        <end position="319"/>
    </location>
</feature>
<feature type="strand" evidence="6">
    <location>
        <begin position="322"/>
        <end position="324"/>
    </location>
</feature>
<feature type="turn" evidence="6">
    <location>
        <begin position="329"/>
        <end position="331"/>
    </location>
</feature>
<feature type="strand" evidence="6">
    <location>
        <begin position="333"/>
        <end position="337"/>
    </location>
</feature>
<feature type="helix" evidence="6">
    <location>
        <begin position="344"/>
        <end position="360"/>
    </location>
</feature>
<protein>
    <recommendedName>
        <fullName>Phosphoserine aminotransferase</fullName>
        <ecNumber>2.6.1.52</ecNumber>
    </recommendedName>
    <alternativeName>
        <fullName>Phosphohydroxythreonine aminotransferase</fullName>
        <shortName>PSAT</shortName>
    </alternativeName>
</protein>
<gene>
    <name type="primary">serC</name>
</gene>
<dbReference type="EC" id="2.6.1.52"/>
<dbReference type="EMBL" id="AF204962">
    <property type="protein sequence ID" value="AAF13453.1"/>
    <property type="molecule type" value="Genomic_DNA"/>
</dbReference>
<dbReference type="RefSeq" id="WP_003322925.1">
    <property type="nucleotide sequence ID" value="NZ_JARMCF010000021.1"/>
</dbReference>
<dbReference type="PDB" id="1W23">
    <property type="method" value="X-ray"/>
    <property type="resolution" value="1.08 A"/>
    <property type="chains" value="A/B=2-361"/>
</dbReference>
<dbReference type="PDB" id="2BHX">
    <property type="method" value="X-ray"/>
    <property type="resolution" value="1.68 A"/>
    <property type="chains" value="A/B=2-361"/>
</dbReference>
<dbReference type="PDB" id="2BI1">
    <property type="method" value="X-ray"/>
    <property type="resolution" value="1.69 A"/>
    <property type="chains" value="A/B=2-361"/>
</dbReference>
<dbReference type="PDB" id="2BI2">
    <property type="method" value="X-ray"/>
    <property type="resolution" value="1.69 A"/>
    <property type="chains" value="A/B=2-361"/>
</dbReference>
<dbReference type="PDB" id="2BI3">
    <property type="method" value="X-ray"/>
    <property type="resolution" value="1.69 A"/>
    <property type="chains" value="A/B=2-361"/>
</dbReference>
<dbReference type="PDB" id="2BI5">
    <property type="method" value="X-ray"/>
    <property type="resolution" value="1.73 A"/>
    <property type="chains" value="A/B=2-361"/>
</dbReference>
<dbReference type="PDB" id="2BI9">
    <property type="method" value="X-ray"/>
    <property type="resolution" value="1.73 A"/>
    <property type="chains" value="A/B=2-361"/>
</dbReference>
<dbReference type="PDB" id="2BIA">
    <property type="method" value="X-ray"/>
    <property type="resolution" value="1.77 A"/>
    <property type="chains" value="A/B=2-361"/>
</dbReference>
<dbReference type="PDB" id="2BIE">
    <property type="method" value="X-ray"/>
    <property type="resolution" value="1.30 A"/>
    <property type="chains" value="A/B=1-361"/>
</dbReference>
<dbReference type="PDB" id="2BIG">
    <property type="method" value="X-ray"/>
    <property type="resolution" value="1.30 A"/>
    <property type="chains" value="A/B=1-361"/>
</dbReference>
<dbReference type="PDB" id="4AZJ">
    <property type="method" value="X-ray"/>
    <property type="resolution" value="1.50 A"/>
    <property type="chains" value="A/B=2-361"/>
</dbReference>
<dbReference type="PDB" id="4AZK">
    <property type="method" value="X-ray"/>
    <property type="resolution" value="1.60 A"/>
    <property type="chains" value="A/B=2-361"/>
</dbReference>
<dbReference type="PDBsum" id="1W23"/>
<dbReference type="PDBsum" id="2BHX"/>
<dbReference type="PDBsum" id="2BI1"/>
<dbReference type="PDBsum" id="2BI2"/>
<dbReference type="PDBsum" id="2BI3"/>
<dbReference type="PDBsum" id="2BI5"/>
<dbReference type="PDBsum" id="2BI9"/>
<dbReference type="PDBsum" id="2BIA"/>
<dbReference type="PDBsum" id="2BIE"/>
<dbReference type="PDBsum" id="2BIG"/>
<dbReference type="PDBsum" id="4AZJ"/>
<dbReference type="PDBsum" id="4AZK"/>
<dbReference type="SMR" id="Q9RME2"/>
<dbReference type="DrugBank" id="DB02327">
    <property type="generic name" value="Triethylene glycol"/>
</dbReference>
<dbReference type="BRENDA" id="2.6.1.52">
    <property type="organism ID" value="628"/>
</dbReference>
<dbReference type="UniPathway" id="UPA00135">
    <property type="reaction ID" value="UER00197"/>
</dbReference>
<dbReference type="EvolutionaryTrace" id="Q9RME2"/>
<dbReference type="GO" id="GO:0005737">
    <property type="term" value="C:cytoplasm"/>
    <property type="evidence" value="ECO:0007669"/>
    <property type="project" value="UniProtKB-SubCell"/>
</dbReference>
<dbReference type="GO" id="GO:0004648">
    <property type="term" value="F:O-phospho-L-serine:2-oxoglutarate aminotransferase activity"/>
    <property type="evidence" value="ECO:0007669"/>
    <property type="project" value="UniProtKB-UniRule"/>
</dbReference>
<dbReference type="GO" id="GO:0030170">
    <property type="term" value="F:pyridoxal phosphate binding"/>
    <property type="evidence" value="ECO:0007669"/>
    <property type="project" value="UniProtKB-UniRule"/>
</dbReference>
<dbReference type="GO" id="GO:0006564">
    <property type="term" value="P:L-serine biosynthetic process"/>
    <property type="evidence" value="ECO:0007669"/>
    <property type="project" value="UniProtKB-UniRule"/>
</dbReference>
<dbReference type="FunFam" id="3.40.640.10:FF:000010">
    <property type="entry name" value="Phosphoserine aminotransferase"/>
    <property type="match status" value="1"/>
</dbReference>
<dbReference type="FunFam" id="3.90.1150.10:FF:000006">
    <property type="entry name" value="Phosphoserine aminotransferase"/>
    <property type="match status" value="1"/>
</dbReference>
<dbReference type="Gene3D" id="3.90.1150.10">
    <property type="entry name" value="Aspartate Aminotransferase, domain 1"/>
    <property type="match status" value="1"/>
</dbReference>
<dbReference type="Gene3D" id="3.40.640.10">
    <property type="entry name" value="Type I PLP-dependent aspartate aminotransferase-like (Major domain)"/>
    <property type="match status" value="1"/>
</dbReference>
<dbReference type="HAMAP" id="MF_00160">
    <property type="entry name" value="SerC_aminotrans_5"/>
    <property type="match status" value="1"/>
</dbReference>
<dbReference type="InterPro" id="IPR000192">
    <property type="entry name" value="Aminotrans_V_dom"/>
</dbReference>
<dbReference type="InterPro" id="IPR020578">
    <property type="entry name" value="Aminotrans_V_PyrdxlP_BS"/>
</dbReference>
<dbReference type="InterPro" id="IPR022278">
    <property type="entry name" value="Pser_aminoTfrase"/>
</dbReference>
<dbReference type="InterPro" id="IPR015424">
    <property type="entry name" value="PyrdxlP-dep_Trfase"/>
</dbReference>
<dbReference type="InterPro" id="IPR015421">
    <property type="entry name" value="PyrdxlP-dep_Trfase_major"/>
</dbReference>
<dbReference type="InterPro" id="IPR015422">
    <property type="entry name" value="PyrdxlP-dep_Trfase_small"/>
</dbReference>
<dbReference type="NCBIfam" id="NF003764">
    <property type="entry name" value="PRK05355.1"/>
    <property type="match status" value="1"/>
</dbReference>
<dbReference type="NCBIfam" id="TIGR01364">
    <property type="entry name" value="serC_1"/>
    <property type="match status" value="1"/>
</dbReference>
<dbReference type="PANTHER" id="PTHR43247">
    <property type="entry name" value="PHOSPHOSERINE AMINOTRANSFERASE"/>
    <property type="match status" value="1"/>
</dbReference>
<dbReference type="PANTHER" id="PTHR43247:SF1">
    <property type="entry name" value="PHOSPHOSERINE AMINOTRANSFERASE"/>
    <property type="match status" value="1"/>
</dbReference>
<dbReference type="Pfam" id="PF00266">
    <property type="entry name" value="Aminotran_5"/>
    <property type="match status" value="1"/>
</dbReference>
<dbReference type="PIRSF" id="PIRSF000525">
    <property type="entry name" value="SerC"/>
    <property type="match status" value="1"/>
</dbReference>
<dbReference type="SUPFAM" id="SSF53383">
    <property type="entry name" value="PLP-dependent transferases"/>
    <property type="match status" value="1"/>
</dbReference>
<dbReference type="PROSITE" id="PS00595">
    <property type="entry name" value="AA_TRANSFER_CLASS_5"/>
    <property type="match status" value="1"/>
</dbReference>
<sequence length="361" mass="40335">MVKQVFNFNAGPSALPKPALERAQKELLNFNDTQMSVMELSHRSQSYEEVHEQAQNLLRELLQIPNDYQILFLQGGASLQFTMLPMNLLTKGTIGNYVLTGSWSEKALKEAKLLGETHIAASTKANSYQSIPDFSEFQLNENDAYLHITSNNTIYGTQYQNFPEINHAPLIADMSSDILSRPLKVNQFGMIYAGAQKNLGPSGVTVVIVKKDLLNTKVEQVPTMLQYATHIKSDSLYNTPPTFSIYMLRNVLDWIKDLGGAEAIAKQNEEKAKIIYDTIDESNGFYVGHAEKGSRSLMNVTFNLRNEELNQQFLAKAKEQGFVGLNGHRSVGGCRASIYNAVPIDACIALRELMIQFKENA</sequence>
<keyword id="KW-0002">3D-structure</keyword>
<keyword id="KW-0028">Amino-acid biosynthesis</keyword>
<keyword id="KW-0032">Aminotransferase</keyword>
<keyword id="KW-0963">Cytoplasm</keyword>
<keyword id="KW-0663">Pyridoxal phosphate</keyword>
<keyword id="KW-0718">Serine biosynthesis</keyword>
<keyword id="KW-0808">Transferase</keyword>